<sequence length="206" mass="23155">MLVTIEGIDGSGKSTLHKALGPYLADLNPVITCEPGSTWIGEAVRRAIREHADPIAEALLFVADHAAHLREVVRPALSEDRLVISDRYIDSRLVYQQVTLDGIIPDPRTWLRAVHQGWTIMPDLTILLAVPVPVALERTGKRGSGEHFEQESVLTKVQEYYMQLVEEDTARFLILDGTLPPEHILKVAGEAIRFRFDEMNRKKKKS</sequence>
<keyword id="KW-0067">ATP-binding</keyword>
<keyword id="KW-0418">Kinase</keyword>
<keyword id="KW-0545">Nucleotide biosynthesis</keyword>
<keyword id="KW-0547">Nucleotide-binding</keyword>
<keyword id="KW-1185">Reference proteome</keyword>
<keyword id="KW-0808">Transferase</keyword>
<evidence type="ECO:0000255" key="1">
    <source>
        <dbReference type="HAMAP-Rule" id="MF_00165"/>
    </source>
</evidence>
<proteinExistence type="inferred from homology"/>
<dbReference type="EC" id="2.7.4.9" evidence="1"/>
<dbReference type="EMBL" id="CP000254">
    <property type="protein sequence ID" value="ABD42326.1"/>
    <property type="molecule type" value="Genomic_DNA"/>
</dbReference>
<dbReference type="RefSeq" id="WP_011449583.1">
    <property type="nucleotide sequence ID" value="NC_007796.1"/>
</dbReference>
<dbReference type="SMR" id="Q2FS90"/>
<dbReference type="FunCoup" id="Q2FS90">
    <property type="interactions" value="136"/>
</dbReference>
<dbReference type="STRING" id="323259.Mhun_2629"/>
<dbReference type="EnsemblBacteria" id="ABD42326">
    <property type="protein sequence ID" value="ABD42326"/>
    <property type="gene ID" value="Mhun_2629"/>
</dbReference>
<dbReference type="GeneID" id="3922365"/>
<dbReference type="KEGG" id="mhu:Mhun_2629"/>
<dbReference type="eggNOG" id="arCOG01891">
    <property type="taxonomic scope" value="Archaea"/>
</dbReference>
<dbReference type="HOGENOM" id="CLU_049131_0_2_2"/>
<dbReference type="InParanoid" id="Q2FS90"/>
<dbReference type="OrthoDB" id="43083at2157"/>
<dbReference type="Proteomes" id="UP000001941">
    <property type="component" value="Chromosome"/>
</dbReference>
<dbReference type="GO" id="GO:0005737">
    <property type="term" value="C:cytoplasm"/>
    <property type="evidence" value="ECO:0007669"/>
    <property type="project" value="TreeGrafter"/>
</dbReference>
<dbReference type="GO" id="GO:0005524">
    <property type="term" value="F:ATP binding"/>
    <property type="evidence" value="ECO:0007669"/>
    <property type="project" value="UniProtKB-UniRule"/>
</dbReference>
<dbReference type="GO" id="GO:0004798">
    <property type="term" value="F:dTMP kinase activity"/>
    <property type="evidence" value="ECO:0007669"/>
    <property type="project" value="UniProtKB-UniRule"/>
</dbReference>
<dbReference type="GO" id="GO:0006233">
    <property type="term" value="P:dTDP biosynthetic process"/>
    <property type="evidence" value="ECO:0007669"/>
    <property type="project" value="InterPro"/>
</dbReference>
<dbReference type="GO" id="GO:0006235">
    <property type="term" value="P:dTTP biosynthetic process"/>
    <property type="evidence" value="ECO:0007669"/>
    <property type="project" value="UniProtKB-UniRule"/>
</dbReference>
<dbReference type="GO" id="GO:0006227">
    <property type="term" value="P:dUDP biosynthetic process"/>
    <property type="evidence" value="ECO:0007669"/>
    <property type="project" value="TreeGrafter"/>
</dbReference>
<dbReference type="CDD" id="cd01672">
    <property type="entry name" value="TMPK"/>
    <property type="match status" value="1"/>
</dbReference>
<dbReference type="Gene3D" id="3.40.50.300">
    <property type="entry name" value="P-loop containing nucleotide triphosphate hydrolases"/>
    <property type="match status" value="1"/>
</dbReference>
<dbReference type="HAMAP" id="MF_00165">
    <property type="entry name" value="Thymidylate_kinase"/>
    <property type="match status" value="1"/>
</dbReference>
<dbReference type="InterPro" id="IPR027417">
    <property type="entry name" value="P-loop_NTPase"/>
</dbReference>
<dbReference type="InterPro" id="IPR039430">
    <property type="entry name" value="Thymidylate_kin-like_dom"/>
</dbReference>
<dbReference type="InterPro" id="IPR018094">
    <property type="entry name" value="Thymidylate_kinase"/>
</dbReference>
<dbReference type="NCBIfam" id="TIGR00041">
    <property type="entry name" value="DTMP_kinase"/>
    <property type="match status" value="1"/>
</dbReference>
<dbReference type="PANTHER" id="PTHR10344">
    <property type="entry name" value="THYMIDYLATE KINASE"/>
    <property type="match status" value="1"/>
</dbReference>
<dbReference type="PANTHER" id="PTHR10344:SF4">
    <property type="entry name" value="UMP-CMP KINASE 2, MITOCHONDRIAL"/>
    <property type="match status" value="1"/>
</dbReference>
<dbReference type="Pfam" id="PF02223">
    <property type="entry name" value="Thymidylate_kin"/>
    <property type="match status" value="1"/>
</dbReference>
<dbReference type="SUPFAM" id="SSF52540">
    <property type="entry name" value="P-loop containing nucleoside triphosphate hydrolases"/>
    <property type="match status" value="1"/>
</dbReference>
<comment type="catalytic activity">
    <reaction evidence="1">
        <text>dTMP + ATP = dTDP + ADP</text>
        <dbReference type="Rhea" id="RHEA:13517"/>
        <dbReference type="ChEBI" id="CHEBI:30616"/>
        <dbReference type="ChEBI" id="CHEBI:58369"/>
        <dbReference type="ChEBI" id="CHEBI:63528"/>
        <dbReference type="ChEBI" id="CHEBI:456216"/>
        <dbReference type="EC" id="2.7.4.9"/>
    </reaction>
</comment>
<comment type="similarity">
    <text evidence="1">Belongs to the thymidylate kinase family.</text>
</comment>
<organism>
    <name type="scientific">Methanospirillum hungatei JF-1 (strain ATCC 27890 / DSM 864 / NBRC 100397 / JF-1)</name>
    <dbReference type="NCBI Taxonomy" id="323259"/>
    <lineage>
        <taxon>Archaea</taxon>
        <taxon>Methanobacteriati</taxon>
        <taxon>Methanobacteriota</taxon>
        <taxon>Stenosarchaea group</taxon>
        <taxon>Methanomicrobia</taxon>
        <taxon>Methanomicrobiales</taxon>
        <taxon>Methanospirillaceae</taxon>
        <taxon>Methanospirillum</taxon>
    </lineage>
</organism>
<reference key="1">
    <citation type="journal article" date="2016" name="Stand. Genomic Sci.">
        <title>Complete genome sequence of Methanospirillum hungatei type strain JF1.</title>
        <authorList>
            <person name="Gunsalus R.P."/>
            <person name="Cook L.E."/>
            <person name="Crable B."/>
            <person name="Rohlin L."/>
            <person name="McDonald E."/>
            <person name="Mouttaki H."/>
            <person name="Sieber J.R."/>
            <person name="Poweleit N."/>
            <person name="Zhou H."/>
            <person name="Lapidus A.L."/>
            <person name="Daligault H.E."/>
            <person name="Land M."/>
            <person name="Gilna P."/>
            <person name="Ivanova N."/>
            <person name="Kyrpides N."/>
            <person name="Culley D.E."/>
            <person name="McInerney M.J."/>
        </authorList>
    </citation>
    <scope>NUCLEOTIDE SEQUENCE [LARGE SCALE GENOMIC DNA]</scope>
    <source>
        <strain>ATCC 27890 / DSM 864 / NBRC 100397 / JF-1</strain>
    </source>
</reference>
<protein>
    <recommendedName>
        <fullName evidence="1">Probable thymidylate kinase</fullName>
        <ecNumber evidence="1">2.7.4.9</ecNumber>
    </recommendedName>
    <alternativeName>
        <fullName evidence="1">dTMP kinase</fullName>
    </alternativeName>
</protein>
<gene>
    <name evidence="1" type="primary">tmk</name>
    <name type="ordered locus">Mhun_2629</name>
</gene>
<accession>Q2FS90</accession>
<name>KTHY_METHJ</name>
<feature type="chain" id="PRO_1000023221" description="Probable thymidylate kinase">
    <location>
        <begin position="1"/>
        <end position="206"/>
    </location>
</feature>
<feature type="binding site" evidence="1">
    <location>
        <begin position="7"/>
        <end position="14"/>
    </location>
    <ligand>
        <name>ATP</name>
        <dbReference type="ChEBI" id="CHEBI:30616"/>
    </ligand>
</feature>